<accession>C1KWD4</accession>
<feature type="chain" id="PRO_1000213877" description="Carbamoyl phosphate synthase large chain">
    <location>
        <begin position="1"/>
        <end position="1070"/>
    </location>
</feature>
<feature type="domain" description="ATP-grasp 1" evidence="1">
    <location>
        <begin position="133"/>
        <end position="327"/>
    </location>
</feature>
<feature type="domain" description="ATP-grasp 2" evidence="1">
    <location>
        <begin position="671"/>
        <end position="861"/>
    </location>
</feature>
<feature type="domain" description="MGS-like" evidence="1">
    <location>
        <begin position="930"/>
        <end position="1070"/>
    </location>
</feature>
<feature type="region of interest" description="Carboxyphosphate synthetic domain" evidence="1">
    <location>
        <begin position="1"/>
        <end position="401"/>
    </location>
</feature>
<feature type="region of interest" description="Oligomerization domain" evidence="1">
    <location>
        <begin position="402"/>
        <end position="546"/>
    </location>
</feature>
<feature type="region of interest" description="Carbamoyl phosphate synthetic domain" evidence="1">
    <location>
        <begin position="547"/>
        <end position="929"/>
    </location>
</feature>
<feature type="region of interest" description="Allosteric domain" evidence="1">
    <location>
        <begin position="930"/>
        <end position="1070"/>
    </location>
</feature>
<feature type="binding site" evidence="1">
    <location>
        <position position="129"/>
    </location>
    <ligand>
        <name>ATP</name>
        <dbReference type="ChEBI" id="CHEBI:30616"/>
        <label>1</label>
    </ligand>
</feature>
<feature type="binding site" evidence="1">
    <location>
        <position position="169"/>
    </location>
    <ligand>
        <name>ATP</name>
        <dbReference type="ChEBI" id="CHEBI:30616"/>
        <label>1</label>
    </ligand>
</feature>
<feature type="binding site" evidence="1">
    <location>
        <position position="175"/>
    </location>
    <ligand>
        <name>ATP</name>
        <dbReference type="ChEBI" id="CHEBI:30616"/>
        <label>1</label>
    </ligand>
</feature>
<feature type="binding site" evidence="1">
    <location>
        <position position="176"/>
    </location>
    <ligand>
        <name>ATP</name>
        <dbReference type="ChEBI" id="CHEBI:30616"/>
        <label>1</label>
    </ligand>
</feature>
<feature type="binding site" evidence="1">
    <location>
        <position position="208"/>
    </location>
    <ligand>
        <name>ATP</name>
        <dbReference type="ChEBI" id="CHEBI:30616"/>
        <label>1</label>
    </ligand>
</feature>
<feature type="binding site" evidence="1">
    <location>
        <position position="210"/>
    </location>
    <ligand>
        <name>ATP</name>
        <dbReference type="ChEBI" id="CHEBI:30616"/>
        <label>1</label>
    </ligand>
</feature>
<feature type="binding site" evidence="1">
    <location>
        <position position="215"/>
    </location>
    <ligand>
        <name>ATP</name>
        <dbReference type="ChEBI" id="CHEBI:30616"/>
        <label>1</label>
    </ligand>
</feature>
<feature type="binding site" evidence="1">
    <location>
        <position position="241"/>
    </location>
    <ligand>
        <name>ATP</name>
        <dbReference type="ChEBI" id="CHEBI:30616"/>
        <label>1</label>
    </ligand>
</feature>
<feature type="binding site" evidence="1">
    <location>
        <position position="242"/>
    </location>
    <ligand>
        <name>ATP</name>
        <dbReference type="ChEBI" id="CHEBI:30616"/>
        <label>1</label>
    </ligand>
</feature>
<feature type="binding site" evidence="1">
    <location>
        <position position="243"/>
    </location>
    <ligand>
        <name>ATP</name>
        <dbReference type="ChEBI" id="CHEBI:30616"/>
        <label>1</label>
    </ligand>
</feature>
<feature type="binding site" evidence="1">
    <location>
        <position position="284"/>
    </location>
    <ligand>
        <name>ATP</name>
        <dbReference type="ChEBI" id="CHEBI:30616"/>
        <label>1</label>
    </ligand>
</feature>
<feature type="binding site" evidence="1">
    <location>
        <position position="284"/>
    </location>
    <ligand>
        <name>Mg(2+)</name>
        <dbReference type="ChEBI" id="CHEBI:18420"/>
        <label>1</label>
    </ligand>
</feature>
<feature type="binding site" evidence="1">
    <location>
        <position position="284"/>
    </location>
    <ligand>
        <name>Mn(2+)</name>
        <dbReference type="ChEBI" id="CHEBI:29035"/>
        <label>1</label>
    </ligand>
</feature>
<feature type="binding site" evidence="1">
    <location>
        <position position="298"/>
    </location>
    <ligand>
        <name>ATP</name>
        <dbReference type="ChEBI" id="CHEBI:30616"/>
        <label>1</label>
    </ligand>
</feature>
<feature type="binding site" evidence="1">
    <location>
        <position position="298"/>
    </location>
    <ligand>
        <name>Mg(2+)</name>
        <dbReference type="ChEBI" id="CHEBI:18420"/>
        <label>1</label>
    </ligand>
</feature>
<feature type="binding site" evidence="1">
    <location>
        <position position="298"/>
    </location>
    <ligand>
        <name>Mg(2+)</name>
        <dbReference type="ChEBI" id="CHEBI:18420"/>
        <label>2</label>
    </ligand>
</feature>
<feature type="binding site" evidence="1">
    <location>
        <position position="298"/>
    </location>
    <ligand>
        <name>Mn(2+)</name>
        <dbReference type="ChEBI" id="CHEBI:29035"/>
        <label>1</label>
    </ligand>
</feature>
<feature type="binding site" evidence="1">
    <location>
        <position position="298"/>
    </location>
    <ligand>
        <name>Mn(2+)</name>
        <dbReference type="ChEBI" id="CHEBI:29035"/>
        <label>2</label>
    </ligand>
</feature>
<feature type="binding site" evidence="1">
    <location>
        <position position="300"/>
    </location>
    <ligand>
        <name>Mg(2+)</name>
        <dbReference type="ChEBI" id="CHEBI:18420"/>
        <label>2</label>
    </ligand>
</feature>
<feature type="binding site" evidence="1">
    <location>
        <position position="300"/>
    </location>
    <ligand>
        <name>Mn(2+)</name>
        <dbReference type="ChEBI" id="CHEBI:29035"/>
        <label>2</label>
    </ligand>
</feature>
<feature type="binding site" evidence="1">
    <location>
        <position position="707"/>
    </location>
    <ligand>
        <name>ATP</name>
        <dbReference type="ChEBI" id="CHEBI:30616"/>
        <label>2</label>
    </ligand>
</feature>
<feature type="binding site" evidence="1">
    <location>
        <position position="746"/>
    </location>
    <ligand>
        <name>ATP</name>
        <dbReference type="ChEBI" id="CHEBI:30616"/>
        <label>2</label>
    </ligand>
</feature>
<feature type="binding site" evidence="1">
    <location>
        <position position="748"/>
    </location>
    <ligand>
        <name>ATP</name>
        <dbReference type="ChEBI" id="CHEBI:30616"/>
        <label>2</label>
    </ligand>
</feature>
<feature type="binding site" evidence="1">
    <location>
        <position position="752"/>
    </location>
    <ligand>
        <name>ATP</name>
        <dbReference type="ChEBI" id="CHEBI:30616"/>
        <label>2</label>
    </ligand>
</feature>
<feature type="binding site" evidence="1">
    <location>
        <position position="777"/>
    </location>
    <ligand>
        <name>ATP</name>
        <dbReference type="ChEBI" id="CHEBI:30616"/>
        <label>2</label>
    </ligand>
</feature>
<feature type="binding site" evidence="1">
    <location>
        <position position="778"/>
    </location>
    <ligand>
        <name>ATP</name>
        <dbReference type="ChEBI" id="CHEBI:30616"/>
        <label>2</label>
    </ligand>
</feature>
<feature type="binding site" evidence="1">
    <location>
        <position position="779"/>
    </location>
    <ligand>
        <name>ATP</name>
        <dbReference type="ChEBI" id="CHEBI:30616"/>
        <label>2</label>
    </ligand>
</feature>
<feature type="binding site" evidence="1">
    <location>
        <position position="780"/>
    </location>
    <ligand>
        <name>ATP</name>
        <dbReference type="ChEBI" id="CHEBI:30616"/>
        <label>2</label>
    </ligand>
</feature>
<feature type="binding site" evidence="1">
    <location>
        <position position="820"/>
    </location>
    <ligand>
        <name>ATP</name>
        <dbReference type="ChEBI" id="CHEBI:30616"/>
        <label>2</label>
    </ligand>
</feature>
<feature type="binding site" evidence="1">
    <location>
        <position position="820"/>
    </location>
    <ligand>
        <name>Mg(2+)</name>
        <dbReference type="ChEBI" id="CHEBI:18420"/>
        <label>3</label>
    </ligand>
</feature>
<feature type="binding site" evidence="1">
    <location>
        <position position="820"/>
    </location>
    <ligand>
        <name>Mn(2+)</name>
        <dbReference type="ChEBI" id="CHEBI:29035"/>
        <label>3</label>
    </ligand>
</feature>
<feature type="binding site" evidence="1">
    <location>
        <position position="832"/>
    </location>
    <ligand>
        <name>ATP</name>
        <dbReference type="ChEBI" id="CHEBI:30616"/>
        <label>2</label>
    </ligand>
</feature>
<feature type="binding site" evidence="1">
    <location>
        <position position="832"/>
    </location>
    <ligand>
        <name>Mg(2+)</name>
        <dbReference type="ChEBI" id="CHEBI:18420"/>
        <label>3</label>
    </ligand>
</feature>
<feature type="binding site" evidence="1">
    <location>
        <position position="832"/>
    </location>
    <ligand>
        <name>Mg(2+)</name>
        <dbReference type="ChEBI" id="CHEBI:18420"/>
        <label>4</label>
    </ligand>
</feature>
<feature type="binding site" evidence="1">
    <location>
        <position position="832"/>
    </location>
    <ligand>
        <name>Mn(2+)</name>
        <dbReference type="ChEBI" id="CHEBI:29035"/>
        <label>3</label>
    </ligand>
</feature>
<feature type="binding site" evidence="1">
    <location>
        <position position="832"/>
    </location>
    <ligand>
        <name>Mn(2+)</name>
        <dbReference type="ChEBI" id="CHEBI:29035"/>
        <label>4</label>
    </ligand>
</feature>
<feature type="binding site" evidence="1">
    <location>
        <position position="834"/>
    </location>
    <ligand>
        <name>Mg(2+)</name>
        <dbReference type="ChEBI" id="CHEBI:18420"/>
        <label>4</label>
    </ligand>
</feature>
<feature type="binding site" evidence="1">
    <location>
        <position position="834"/>
    </location>
    <ligand>
        <name>Mn(2+)</name>
        <dbReference type="ChEBI" id="CHEBI:29035"/>
        <label>4</label>
    </ligand>
</feature>
<dbReference type="EC" id="6.3.4.16" evidence="1"/>
<dbReference type="EC" id="6.3.5.5" evidence="1"/>
<dbReference type="EMBL" id="FM242711">
    <property type="protein sequence ID" value="CAS05609.1"/>
    <property type="molecule type" value="Genomic_DNA"/>
</dbReference>
<dbReference type="RefSeq" id="WP_012681352.1">
    <property type="nucleotide sequence ID" value="NC_012488.1"/>
</dbReference>
<dbReference type="SMR" id="C1KWD4"/>
<dbReference type="KEGG" id="lmc:Lm4b_01851"/>
<dbReference type="HOGENOM" id="CLU_000513_1_2_9"/>
<dbReference type="UniPathway" id="UPA00068">
    <property type="reaction ID" value="UER00171"/>
</dbReference>
<dbReference type="UniPathway" id="UPA00070">
    <property type="reaction ID" value="UER00115"/>
</dbReference>
<dbReference type="GO" id="GO:0005737">
    <property type="term" value="C:cytoplasm"/>
    <property type="evidence" value="ECO:0007669"/>
    <property type="project" value="TreeGrafter"/>
</dbReference>
<dbReference type="GO" id="GO:0005524">
    <property type="term" value="F:ATP binding"/>
    <property type="evidence" value="ECO:0007669"/>
    <property type="project" value="UniProtKB-UniRule"/>
</dbReference>
<dbReference type="GO" id="GO:0004087">
    <property type="term" value="F:carbamoyl-phosphate synthase (ammonia) activity"/>
    <property type="evidence" value="ECO:0007669"/>
    <property type="project" value="RHEA"/>
</dbReference>
<dbReference type="GO" id="GO:0004088">
    <property type="term" value="F:carbamoyl-phosphate synthase (glutamine-hydrolyzing) activity"/>
    <property type="evidence" value="ECO:0007669"/>
    <property type="project" value="UniProtKB-UniRule"/>
</dbReference>
<dbReference type="GO" id="GO:0046872">
    <property type="term" value="F:metal ion binding"/>
    <property type="evidence" value="ECO:0007669"/>
    <property type="project" value="UniProtKB-KW"/>
</dbReference>
<dbReference type="GO" id="GO:0044205">
    <property type="term" value="P:'de novo' UMP biosynthetic process"/>
    <property type="evidence" value="ECO:0007669"/>
    <property type="project" value="UniProtKB-UniRule"/>
</dbReference>
<dbReference type="GO" id="GO:0006541">
    <property type="term" value="P:glutamine metabolic process"/>
    <property type="evidence" value="ECO:0007669"/>
    <property type="project" value="TreeGrafter"/>
</dbReference>
<dbReference type="GO" id="GO:0006526">
    <property type="term" value="P:L-arginine biosynthetic process"/>
    <property type="evidence" value="ECO:0007669"/>
    <property type="project" value="UniProtKB-UniRule"/>
</dbReference>
<dbReference type="CDD" id="cd01424">
    <property type="entry name" value="MGS_CPS_II"/>
    <property type="match status" value="1"/>
</dbReference>
<dbReference type="FunFam" id="1.10.1030.10:FF:000002">
    <property type="entry name" value="Carbamoyl-phosphate synthase large chain"/>
    <property type="match status" value="1"/>
</dbReference>
<dbReference type="FunFam" id="3.30.1490.20:FF:000001">
    <property type="entry name" value="Carbamoyl-phosphate synthase large chain"/>
    <property type="match status" value="1"/>
</dbReference>
<dbReference type="FunFam" id="3.30.470.20:FF:000001">
    <property type="entry name" value="Carbamoyl-phosphate synthase large chain"/>
    <property type="match status" value="1"/>
</dbReference>
<dbReference type="FunFam" id="3.30.470.20:FF:000026">
    <property type="entry name" value="Carbamoyl-phosphate synthase large chain"/>
    <property type="match status" value="1"/>
</dbReference>
<dbReference type="FunFam" id="3.40.50.1380:FF:000011">
    <property type="entry name" value="Carbamoyl-phosphate synthase large chain"/>
    <property type="match status" value="1"/>
</dbReference>
<dbReference type="FunFam" id="3.40.50.20:FF:000001">
    <property type="entry name" value="Carbamoyl-phosphate synthase large chain"/>
    <property type="match status" value="2"/>
</dbReference>
<dbReference type="Gene3D" id="3.40.50.20">
    <property type="match status" value="2"/>
</dbReference>
<dbReference type="Gene3D" id="3.30.1490.20">
    <property type="entry name" value="ATP-grasp fold, A domain"/>
    <property type="match status" value="1"/>
</dbReference>
<dbReference type="Gene3D" id="3.30.470.20">
    <property type="entry name" value="ATP-grasp fold, B domain"/>
    <property type="match status" value="2"/>
</dbReference>
<dbReference type="Gene3D" id="1.10.1030.10">
    <property type="entry name" value="Carbamoyl-phosphate synthetase, large subunit oligomerisation domain"/>
    <property type="match status" value="1"/>
</dbReference>
<dbReference type="Gene3D" id="3.40.50.1380">
    <property type="entry name" value="Methylglyoxal synthase-like domain"/>
    <property type="match status" value="1"/>
</dbReference>
<dbReference type="HAMAP" id="MF_01210_A">
    <property type="entry name" value="CPSase_L_chain_A"/>
    <property type="match status" value="1"/>
</dbReference>
<dbReference type="HAMAP" id="MF_01210_B">
    <property type="entry name" value="CPSase_L_chain_B"/>
    <property type="match status" value="1"/>
</dbReference>
<dbReference type="InterPro" id="IPR011761">
    <property type="entry name" value="ATP-grasp"/>
</dbReference>
<dbReference type="InterPro" id="IPR013815">
    <property type="entry name" value="ATP_grasp_subdomain_1"/>
</dbReference>
<dbReference type="InterPro" id="IPR006275">
    <property type="entry name" value="CarbamoylP_synth_lsu"/>
</dbReference>
<dbReference type="InterPro" id="IPR005480">
    <property type="entry name" value="CarbamoylP_synth_lsu_oligo"/>
</dbReference>
<dbReference type="InterPro" id="IPR036897">
    <property type="entry name" value="CarbamoylP_synth_lsu_oligo_sf"/>
</dbReference>
<dbReference type="InterPro" id="IPR005479">
    <property type="entry name" value="CbamoylP_synth_lsu-like_ATP-bd"/>
</dbReference>
<dbReference type="InterPro" id="IPR005483">
    <property type="entry name" value="CbamoylP_synth_lsu_CPSase_dom"/>
</dbReference>
<dbReference type="InterPro" id="IPR011607">
    <property type="entry name" value="MGS-like_dom"/>
</dbReference>
<dbReference type="InterPro" id="IPR036914">
    <property type="entry name" value="MGS-like_dom_sf"/>
</dbReference>
<dbReference type="InterPro" id="IPR033937">
    <property type="entry name" value="MGS_CPS_CarB"/>
</dbReference>
<dbReference type="InterPro" id="IPR016185">
    <property type="entry name" value="PreATP-grasp_dom_sf"/>
</dbReference>
<dbReference type="NCBIfam" id="TIGR01369">
    <property type="entry name" value="CPSaseII_lrg"/>
    <property type="match status" value="1"/>
</dbReference>
<dbReference type="NCBIfam" id="NF003671">
    <property type="entry name" value="PRK05294.1"/>
    <property type="match status" value="1"/>
</dbReference>
<dbReference type="NCBIfam" id="NF009455">
    <property type="entry name" value="PRK12815.1"/>
    <property type="match status" value="1"/>
</dbReference>
<dbReference type="PANTHER" id="PTHR11405:SF53">
    <property type="entry name" value="CARBAMOYL-PHOSPHATE SYNTHASE [AMMONIA], MITOCHONDRIAL"/>
    <property type="match status" value="1"/>
</dbReference>
<dbReference type="PANTHER" id="PTHR11405">
    <property type="entry name" value="CARBAMOYLTRANSFERASE FAMILY MEMBER"/>
    <property type="match status" value="1"/>
</dbReference>
<dbReference type="Pfam" id="PF02786">
    <property type="entry name" value="CPSase_L_D2"/>
    <property type="match status" value="2"/>
</dbReference>
<dbReference type="Pfam" id="PF02787">
    <property type="entry name" value="CPSase_L_D3"/>
    <property type="match status" value="1"/>
</dbReference>
<dbReference type="Pfam" id="PF02142">
    <property type="entry name" value="MGS"/>
    <property type="match status" value="1"/>
</dbReference>
<dbReference type="PRINTS" id="PR00098">
    <property type="entry name" value="CPSASE"/>
</dbReference>
<dbReference type="SMART" id="SM01096">
    <property type="entry name" value="CPSase_L_D3"/>
    <property type="match status" value="1"/>
</dbReference>
<dbReference type="SMART" id="SM00851">
    <property type="entry name" value="MGS"/>
    <property type="match status" value="1"/>
</dbReference>
<dbReference type="SUPFAM" id="SSF48108">
    <property type="entry name" value="Carbamoyl phosphate synthetase, large subunit connection domain"/>
    <property type="match status" value="1"/>
</dbReference>
<dbReference type="SUPFAM" id="SSF56059">
    <property type="entry name" value="Glutathione synthetase ATP-binding domain-like"/>
    <property type="match status" value="2"/>
</dbReference>
<dbReference type="SUPFAM" id="SSF52335">
    <property type="entry name" value="Methylglyoxal synthase-like"/>
    <property type="match status" value="1"/>
</dbReference>
<dbReference type="SUPFAM" id="SSF52440">
    <property type="entry name" value="PreATP-grasp domain"/>
    <property type="match status" value="2"/>
</dbReference>
<dbReference type="PROSITE" id="PS50975">
    <property type="entry name" value="ATP_GRASP"/>
    <property type="match status" value="2"/>
</dbReference>
<dbReference type="PROSITE" id="PS00866">
    <property type="entry name" value="CPSASE_1"/>
    <property type="match status" value="2"/>
</dbReference>
<dbReference type="PROSITE" id="PS00867">
    <property type="entry name" value="CPSASE_2"/>
    <property type="match status" value="2"/>
</dbReference>
<dbReference type="PROSITE" id="PS51855">
    <property type="entry name" value="MGS"/>
    <property type="match status" value="1"/>
</dbReference>
<name>CARB_LISMC</name>
<keyword id="KW-0028">Amino-acid biosynthesis</keyword>
<keyword id="KW-0055">Arginine biosynthesis</keyword>
<keyword id="KW-0067">ATP-binding</keyword>
<keyword id="KW-0436">Ligase</keyword>
<keyword id="KW-0460">Magnesium</keyword>
<keyword id="KW-0464">Manganese</keyword>
<keyword id="KW-0479">Metal-binding</keyword>
<keyword id="KW-0547">Nucleotide-binding</keyword>
<keyword id="KW-0665">Pyrimidine biosynthesis</keyword>
<keyword id="KW-0677">Repeat</keyword>
<evidence type="ECO:0000255" key="1">
    <source>
        <dbReference type="HAMAP-Rule" id="MF_01210"/>
    </source>
</evidence>
<proteinExistence type="inferred from homology"/>
<protein>
    <recommendedName>
        <fullName evidence="1">Carbamoyl phosphate synthase large chain</fullName>
        <ecNumber evidence="1">6.3.4.16</ecNumber>
        <ecNumber evidence="1">6.3.5.5</ecNumber>
    </recommendedName>
    <alternativeName>
        <fullName evidence="1">Carbamoyl phosphate synthetase ammonia chain</fullName>
    </alternativeName>
</protein>
<sequence length="1070" mass="117762">MPKRDDIKTILVIGSGPIVIGQAAEFDYAGTQACLSLKEEGYRVVLVNSNPATIMTDAEMADKVYIEPITLDFVSRIIRKERPDAILPTLGGQTGLNMAMELSAAGILDECNVEVLGTDLTAIKKAEDREAFRDLMNELGEPVPESDIIHNLDEAYTFVERIGYPVIVRPAYTLGGSGGGICHNEQELIETVTSGLKLSPVTQCLLEKSIAGFKEVEYEVMRDANNNAMVVCNMENIDPVGIHTGDSIVVAPSQTLSDREYQLLRDVSLKIIRALEIEGGCNVQLALDPDSYNYYVIEVNPRVSRSSALASKATGYPIAKLAAKIAVGLTLDEVRNPVTGTTFAHFEPTLDYVVAKIPRFAFDKFEQADRRLGTQMKATGEVMAIGRSWEEALLKAVRSLEIGADHLLLEEAENADEATLERKICFPEDDRLFFLAAALRRGQTIEQLHAKTKIDLFFLYKLSKTIELENRIKENPQNQEILAEAKRAGFSDAFLATCWNVDEQAIYDLRKAQNLFPVYKMVDTCAAEFESTTPYFYSTYEEENESTRSAKESVIVLGSGPIRIGQGVEFDYATVHSVWAIQQAGYEAIIINNNPETVSTDFSISDKLYFEPLTLEDVMHVIEIEQPLGVVVQFGGQTAINLADGLAKRGVKILGTSLEDTDRAENRDAFEKALGILQIPQPAGKTATSVEEAINVATDIGYPVLVRPSYVLGGRAMEIVESEEALKHYMTNAVKVNPKHPVLVDRYVSGQEVEVDAISDGENVLIPGIMEHIERAGVHSGDSIAVYPAQRLSSQVKNTIVDYTTRLATGLNIIGMLNIQYVVDGEEVFVIEVNPRSSRTAPFLSKITEIPMANVATRVILGENLIDLGYTPGLAPEKQEIFVKVPVFSFAKLRSVDTSLGPEMKSTGEVMGKDVTLEKALYKGFVASGTTMHDYGTVLLTVADRDKEEAVELAKRFNRIGFTIMATKGTASTLEEADIPVSQVKKIGENQETLIDYIRNGQVTLVVNTLTTGKRPERDGFQIRRESVENGIPVCTSLDTAEAILRVLESRSFELESMNTSEVKQPKARV</sequence>
<reference key="1">
    <citation type="journal article" date="2012" name="BMC Genomics">
        <title>Comparative genomics and transcriptomics of lineages I, II, and III strains of Listeria monocytogenes.</title>
        <authorList>
            <person name="Hain T."/>
            <person name="Ghai R."/>
            <person name="Billion A."/>
            <person name="Kuenne C.T."/>
            <person name="Steinweg C."/>
            <person name="Izar B."/>
            <person name="Mohamed W."/>
            <person name="Mraheil M."/>
            <person name="Domann E."/>
            <person name="Schaffrath S."/>
            <person name="Karst U."/>
            <person name="Goesmann A."/>
            <person name="Oehm S."/>
            <person name="Puhler A."/>
            <person name="Merkl R."/>
            <person name="Vorwerk S."/>
            <person name="Glaser P."/>
            <person name="Garrido P."/>
            <person name="Rusniok C."/>
            <person name="Buchrieser C."/>
            <person name="Goebel W."/>
            <person name="Chakraborty T."/>
        </authorList>
    </citation>
    <scope>NUCLEOTIDE SEQUENCE [LARGE SCALE GENOMIC DNA]</scope>
    <source>
        <strain>CLIP80459</strain>
    </source>
</reference>
<organism>
    <name type="scientific">Listeria monocytogenes serotype 4b (strain CLIP80459)</name>
    <dbReference type="NCBI Taxonomy" id="568819"/>
    <lineage>
        <taxon>Bacteria</taxon>
        <taxon>Bacillati</taxon>
        <taxon>Bacillota</taxon>
        <taxon>Bacilli</taxon>
        <taxon>Bacillales</taxon>
        <taxon>Listeriaceae</taxon>
        <taxon>Listeria</taxon>
    </lineage>
</organism>
<comment type="function">
    <text evidence="1">Large subunit of the glutamine-dependent carbamoyl phosphate synthetase (CPSase). CPSase catalyzes the formation of carbamoyl phosphate from the ammonia moiety of glutamine, carbonate, and phosphate donated by ATP, constituting the first step of 2 biosynthetic pathways, one leading to arginine and/or urea and the other to pyrimidine nucleotides. The large subunit (synthetase) binds the substrates ammonia (free or transferred from glutamine from the small subunit), hydrogencarbonate and ATP and carries out an ATP-coupled ligase reaction, activating hydrogencarbonate by forming carboxy phosphate which reacts with ammonia to form carbamoyl phosphate.</text>
</comment>
<comment type="catalytic activity">
    <reaction evidence="1">
        <text>hydrogencarbonate + L-glutamine + 2 ATP + H2O = carbamoyl phosphate + L-glutamate + 2 ADP + phosphate + 2 H(+)</text>
        <dbReference type="Rhea" id="RHEA:18633"/>
        <dbReference type="ChEBI" id="CHEBI:15377"/>
        <dbReference type="ChEBI" id="CHEBI:15378"/>
        <dbReference type="ChEBI" id="CHEBI:17544"/>
        <dbReference type="ChEBI" id="CHEBI:29985"/>
        <dbReference type="ChEBI" id="CHEBI:30616"/>
        <dbReference type="ChEBI" id="CHEBI:43474"/>
        <dbReference type="ChEBI" id="CHEBI:58228"/>
        <dbReference type="ChEBI" id="CHEBI:58359"/>
        <dbReference type="ChEBI" id="CHEBI:456216"/>
        <dbReference type="EC" id="6.3.5.5"/>
    </reaction>
</comment>
<comment type="catalytic activity">
    <molecule>Carbamoyl phosphate synthase large chain</molecule>
    <reaction evidence="1">
        <text>hydrogencarbonate + NH4(+) + 2 ATP = carbamoyl phosphate + 2 ADP + phosphate + 2 H(+)</text>
        <dbReference type="Rhea" id="RHEA:18029"/>
        <dbReference type="ChEBI" id="CHEBI:15378"/>
        <dbReference type="ChEBI" id="CHEBI:17544"/>
        <dbReference type="ChEBI" id="CHEBI:28938"/>
        <dbReference type="ChEBI" id="CHEBI:30616"/>
        <dbReference type="ChEBI" id="CHEBI:43474"/>
        <dbReference type="ChEBI" id="CHEBI:58228"/>
        <dbReference type="ChEBI" id="CHEBI:456216"/>
        <dbReference type="EC" id="6.3.4.16"/>
    </reaction>
</comment>
<comment type="cofactor">
    <cofactor evidence="1">
        <name>Mg(2+)</name>
        <dbReference type="ChEBI" id="CHEBI:18420"/>
    </cofactor>
    <cofactor evidence="1">
        <name>Mn(2+)</name>
        <dbReference type="ChEBI" id="CHEBI:29035"/>
    </cofactor>
    <text evidence="1">Binds 4 Mg(2+) or Mn(2+) ions per subunit.</text>
</comment>
<comment type="pathway">
    <text evidence="1">Amino-acid biosynthesis; L-arginine biosynthesis; carbamoyl phosphate from bicarbonate: step 1/1.</text>
</comment>
<comment type="pathway">
    <text evidence="1">Pyrimidine metabolism; UMP biosynthesis via de novo pathway; (S)-dihydroorotate from bicarbonate: step 1/3.</text>
</comment>
<comment type="subunit">
    <text evidence="1">Composed of two chains; the small (or glutamine) chain promotes the hydrolysis of glutamine to ammonia, which is used by the large (or ammonia) chain to synthesize carbamoyl phosphate. Tetramer of heterodimers (alpha,beta)4.</text>
</comment>
<comment type="domain">
    <text evidence="1">The large subunit is composed of 2 ATP-grasp domains that are involved in binding the 2 ATP molecules needed for carbamoyl phosphate synthesis. The N-terminal ATP-grasp domain (referred to as the carboxyphosphate synthetic component) catalyzes the ATP-dependent phosphorylation of hydrogencarbonate to carboxyphosphate and the subsequent nucleophilic attack by ammonia to form a carbamate intermediate. The C-terminal ATP-grasp domain (referred to as the carbamoyl phosphate synthetic component) then catalyzes the phosphorylation of carbamate with the second ATP to form the end product carbamoyl phosphate. The reactive and unstable enzyme intermediates are sequentially channeled from one active site to the next through the interior of the protein over a distance of at least 96 A.</text>
</comment>
<comment type="similarity">
    <text evidence="1">Belongs to the CarB family.</text>
</comment>
<gene>
    <name evidence="1" type="primary">carB</name>
    <name type="ordered locus">Lm4b_01851</name>
</gene>